<accession>C3LRF4</accession>
<protein>
    <recommendedName>
        <fullName evidence="1">Arginine deiminase</fullName>
        <shortName evidence="1">ADI</shortName>
        <ecNumber evidence="1">3.5.3.6</ecNumber>
    </recommendedName>
    <alternativeName>
        <fullName evidence="1">Arginine dihydrolase</fullName>
        <shortName evidence="1">AD</shortName>
    </alternativeName>
</protein>
<gene>
    <name evidence="1" type="primary">arcA</name>
    <name type="ordered locus">VCM66_0408</name>
</gene>
<organism>
    <name type="scientific">Vibrio cholerae serotype O1 (strain M66-2)</name>
    <dbReference type="NCBI Taxonomy" id="579112"/>
    <lineage>
        <taxon>Bacteria</taxon>
        <taxon>Pseudomonadati</taxon>
        <taxon>Pseudomonadota</taxon>
        <taxon>Gammaproteobacteria</taxon>
        <taxon>Vibrionales</taxon>
        <taxon>Vibrionaceae</taxon>
        <taxon>Vibrio</taxon>
    </lineage>
</organism>
<name>ARCA_VIBCM</name>
<reference key="1">
    <citation type="journal article" date="2008" name="PLoS ONE">
        <title>A recalibrated molecular clock and independent origins for the cholera pandemic clones.</title>
        <authorList>
            <person name="Feng L."/>
            <person name="Reeves P.R."/>
            <person name="Lan R."/>
            <person name="Ren Y."/>
            <person name="Gao C."/>
            <person name="Zhou Z."/>
            <person name="Ren Y."/>
            <person name="Cheng J."/>
            <person name="Wang W."/>
            <person name="Wang J."/>
            <person name="Qian W."/>
            <person name="Li D."/>
            <person name="Wang L."/>
        </authorList>
    </citation>
    <scope>NUCLEOTIDE SEQUENCE [LARGE SCALE GENOMIC DNA]</scope>
    <source>
        <strain>M66-2</strain>
    </source>
</reference>
<dbReference type="EC" id="3.5.3.6" evidence="1"/>
<dbReference type="EMBL" id="CP001233">
    <property type="protein sequence ID" value="ACP04734.1"/>
    <property type="molecule type" value="Genomic_DNA"/>
</dbReference>
<dbReference type="RefSeq" id="WP_001081182.1">
    <property type="nucleotide sequence ID" value="NC_012578.1"/>
</dbReference>
<dbReference type="SMR" id="C3LRF4"/>
<dbReference type="KEGG" id="vcm:VCM66_0408"/>
<dbReference type="HOGENOM" id="CLU_052662_0_0_6"/>
<dbReference type="UniPathway" id="UPA00254">
    <property type="reaction ID" value="UER00364"/>
</dbReference>
<dbReference type="Proteomes" id="UP000001217">
    <property type="component" value="Chromosome I"/>
</dbReference>
<dbReference type="GO" id="GO:0005737">
    <property type="term" value="C:cytoplasm"/>
    <property type="evidence" value="ECO:0007669"/>
    <property type="project" value="UniProtKB-SubCell"/>
</dbReference>
<dbReference type="GO" id="GO:0016990">
    <property type="term" value="F:arginine deiminase activity"/>
    <property type="evidence" value="ECO:0007669"/>
    <property type="project" value="UniProtKB-UniRule"/>
</dbReference>
<dbReference type="GO" id="GO:0019547">
    <property type="term" value="P:arginine catabolic process to ornithine"/>
    <property type="evidence" value="ECO:0007669"/>
    <property type="project" value="UniProtKB-UniRule"/>
</dbReference>
<dbReference type="GO" id="GO:0019546">
    <property type="term" value="P:arginine deiminase pathway"/>
    <property type="evidence" value="ECO:0007669"/>
    <property type="project" value="TreeGrafter"/>
</dbReference>
<dbReference type="FunFam" id="1.10.3930.10:FF:000002">
    <property type="entry name" value="Arginine deiminase"/>
    <property type="match status" value="1"/>
</dbReference>
<dbReference type="Gene3D" id="1.10.3930.10">
    <property type="entry name" value="Arginine deiminase"/>
    <property type="match status" value="1"/>
</dbReference>
<dbReference type="Gene3D" id="3.75.10.10">
    <property type="entry name" value="L-arginine/glycine Amidinotransferase, Chain A"/>
    <property type="match status" value="1"/>
</dbReference>
<dbReference type="HAMAP" id="MF_00242">
    <property type="entry name" value="Arg_deiminase"/>
    <property type="match status" value="1"/>
</dbReference>
<dbReference type="InterPro" id="IPR003876">
    <property type="entry name" value="Arg_deiminase"/>
</dbReference>
<dbReference type="NCBIfam" id="TIGR01078">
    <property type="entry name" value="arcA"/>
    <property type="match status" value="1"/>
</dbReference>
<dbReference type="NCBIfam" id="NF002381">
    <property type="entry name" value="PRK01388.1"/>
    <property type="match status" value="1"/>
</dbReference>
<dbReference type="PANTHER" id="PTHR47271">
    <property type="entry name" value="ARGININE DEIMINASE"/>
    <property type="match status" value="1"/>
</dbReference>
<dbReference type="PANTHER" id="PTHR47271:SF2">
    <property type="entry name" value="ARGININE DEIMINASE"/>
    <property type="match status" value="1"/>
</dbReference>
<dbReference type="Pfam" id="PF02274">
    <property type="entry name" value="ADI"/>
    <property type="match status" value="1"/>
</dbReference>
<dbReference type="PIRSF" id="PIRSF006356">
    <property type="entry name" value="Arg_deiminase"/>
    <property type="match status" value="1"/>
</dbReference>
<dbReference type="PRINTS" id="PR01466">
    <property type="entry name" value="ARGDEIMINASE"/>
</dbReference>
<dbReference type="SUPFAM" id="SSF55909">
    <property type="entry name" value="Pentein"/>
    <property type="match status" value="1"/>
</dbReference>
<feature type="chain" id="PRO_1000125329" description="Arginine deiminase">
    <location>
        <begin position="1"/>
        <end position="407"/>
    </location>
</feature>
<feature type="active site" description="Amidino-cysteine intermediate" evidence="1">
    <location>
        <position position="397"/>
    </location>
</feature>
<comment type="catalytic activity">
    <reaction evidence="1">
        <text>L-arginine + H2O = L-citrulline + NH4(+)</text>
        <dbReference type="Rhea" id="RHEA:19597"/>
        <dbReference type="ChEBI" id="CHEBI:15377"/>
        <dbReference type="ChEBI" id="CHEBI:28938"/>
        <dbReference type="ChEBI" id="CHEBI:32682"/>
        <dbReference type="ChEBI" id="CHEBI:57743"/>
        <dbReference type="EC" id="3.5.3.6"/>
    </reaction>
</comment>
<comment type="pathway">
    <text evidence="1">Amino-acid degradation; L-arginine degradation via ADI pathway; carbamoyl phosphate from L-arginine: step 1/2.</text>
</comment>
<comment type="subcellular location">
    <subcellularLocation>
        <location evidence="1">Cytoplasm</location>
    </subcellularLocation>
</comment>
<comment type="similarity">
    <text evidence="1">Belongs to the arginine deiminase family.</text>
</comment>
<proteinExistence type="inferred from homology"/>
<evidence type="ECO:0000255" key="1">
    <source>
        <dbReference type="HAMAP-Rule" id="MF_00242"/>
    </source>
</evidence>
<sequence>MNRLYVGSEVGQLRRVLLNRPERALTHLTPSNCHELLFDDVLAVEAAGVEHDAFANTLRTQDVEVLLLHDLLEETLAIPEARQWLLNTQISDFRFGPTFARELRHALNHLDDHHLTTLLLGGLAFSELHLESDSMLPKMRQPLDFVIEPLPNHLFTRDTSCWVYGGVSLNPMMKPARQRETNHLRAIYRWHPIFAQHPFIHYFGIDDLHYDNANIEGGDVLVIGKGAVLIGMSERTSPQGVENLAAALFKHGQASKVIAINLPKHRSCMHLDTVMTHMDVDTFSVYPEVMRKDLPTWRLTPKGNNGDMRVEQVPSYLHAIEQALGVDYLKIITTGGNSYEAEREQWNDANNVLTVKPGVVIGYERNVYTNEKYDKAGIKVLTIPGNELGRGRGGARCMSCPIERDGI</sequence>
<keyword id="KW-0056">Arginine metabolism</keyword>
<keyword id="KW-0963">Cytoplasm</keyword>
<keyword id="KW-0378">Hydrolase</keyword>